<sequence length="200" mass="22464">MNDNNNEIDQLIYLFSKLPGLGSRSARRIVLYLLQDKDVRLKTLINNLTEIDKKIVKCQVCGNMDTENICGICTSEYRDKSVIAIVETVAELWAMERSGNFKGLYHVLGHNLSAASRQNPSILRLPELLDRCFKENIKEVIIATNSTLEGQTTAYFITEYLKDHPAKISRLASGIPIGGELDYLDEGTLSAAINLRQPFE</sequence>
<dbReference type="EMBL" id="CP000849">
    <property type="protein sequence ID" value="ABV78608.1"/>
    <property type="molecule type" value="Genomic_DNA"/>
</dbReference>
<dbReference type="RefSeq" id="WP_011477894.1">
    <property type="nucleotide sequence ID" value="NC_009883.1"/>
</dbReference>
<dbReference type="SMR" id="A8GUU1"/>
<dbReference type="KEGG" id="rbo:A1I_01060"/>
<dbReference type="HOGENOM" id="CLU_060739_1_1_5"/>
<dbReference type="GO" id="GO:0003677">
    <property type="term" value="F:DNA binding"/>
    <property type="evidence" value="ECO:0007669"/>
    <property type="project" value="UniProtKB-UniRule"/>
</dbReference>
<dbReference type="GO" id="GO:0008270">
    <property type="term" value="F:zinc ion binding"/>
    <property type="evidence" value="ECO:0007669"/>
    <property type="project" value="UniProtKB-KW"/>
</dbReference>
<dbReference type="GO" id="GO:0006310">
    <property type="term" value="P:DNA recombination"/>
    <property type="evidence" value="ECO:0007669"/>
    <property type="project" value="UniProtKB-UniRule"/>
</dbReference>
<dbReference type="GO" id="GO:0006281">
    <property type="term" value="P:DNA repair"/>
    <property type="evidence" value="ECO:0007669"/>
    <property type="project" value="UniProtKB-UniRule"/>
</dbReference>
<dbReference type="CDD" id="cd01025">
    <property type="entry name" value="TOPRIM_recR"/>
    <property type="match status" value="1"/>
</dbReference>
<dbReference type="Gene3D" id="3.40.1360.10">
    <property type="match status" value="1"/>
</dbReference>
<dbReference type="Gene3D" id="6.10.250.240">
    <property type="match status" value="1"/>
</dbReference>
<dbReference type="Gene3D" id="1.10.8.420">
    <property type="entry name" value="RecR Domain 1"/>
    <property type="match status" value="1"/>
</dbReference>
<dbReference type="HAMAP" id="MF_00017">
    <property type="entry name" value="RecR"/>
    <property type="match status" value="1"/>
</dbReference>
<dbReference type="InterPro" id="IPR000093">
    <property type="entry name" value="DNA_Rcmb_RecR"/>
</dbReference>
<dbReference type="InterPro" id="IPR023627">
    <property type="entry name" value="Rcmb_RecR"/>
</dbReference>
<dbReference type="InterPro" id="IPR015967">
    <property type="entry name" value="Rcmb_RecR_Znf"/>
</dbReference>
<dbReference type="InterPro" id="IPR006171">
    <property type="entry name" value="TOPRIM_dom"/>
</dbReference>
<dbReference type="InterPro" id="IPR034137">
    <property type="entry name" value="TOPRIM_RecR"/>
</dbReference>
<dbReference type="NCBIfam" id="TIGR00615">
    <property type="entry name" value="recR"/>
    <property type="match status" value="1"/>
</dbReference>
<dbReference type="PANTHER" id="PTHR30446">
    <property type="entry name" value="RECOMBINATION PROTEIN RECR"/>
    <property type="match status" value="1"/>
</dbReference>
<dbReference type="PANTHER" id="PTHR30446:SF0">
    <property type="entry name" value="RECOMBINATION PROTEIN RECR"/>
    <property type="match status" value="1"/>
</dbReference>
<dbReference type="Pfam" id="PF21175">
    <property type="entry name" value="RecR_C"/>
    <property type="match status" value="1"/>
</dbReference>
<dbReference type="Pfam" id="PF21176">
    <property type="entry name" value="RecR_HhH"/>
    <property type="match status" value="1"/>
</dbReference>
<dbReference type="Pfam" id="PF02132">
    <property type="entry name" value="RecR_ZnF"/>
    <property type="match status" value="1"/>
</dbReference>
<dbReference type="Pfam" id="PF13662">
    <property type="entry name" value="Toprim_4"/>
    <property type="match status" value="1"/>
</dbReference>
<dbReference type="SMART" id="SM00493">
    <property type="entry name" value="TOPRIM"/>
    <property type="match status" value="1"/>
</dbReference>
<dbReference type="SUPFAM" id="SSF111304">
    <property type="entry name" value="Recombination protein RecR"/>
    <property type="match status" value="1"/>
</dbReference>
<dbReference type="PROSITE" id="PS01300">
    <property type="entry name" value="RECR"/>
    <property type="match status" value="1"/>
</dbReference>
<dbReference type="PROSITE" id="PS50880">
    <property type="entry name" value="TOPRIM"/>
    <property type="match status" value="1"/>
</dbReference>
<proteinExistence type="inferred from homology"/>
<name>RECR_RICB8</name>
<keyword id="KW-0227">DNA damage</keyword>
<keyword id="KW-0233">DNA recombination</keyword>
<keyword id="KW-0234">DNA repair</keyword>
<keyword id="KW-0479">Metal-binding</keyword>
<keyword id="KW-0862">Zinc</keyword>
<keyword id="KW-0863">Zinc-finger</keyword>
<protein>
    <recommendedName>
        <fullName evidence="1">Recombination protein RecR</fullName>
    </recommendedName>
</protein>
<accession>A8GUU1</accession>
<gene>
    <name evidence="1" type="primary">recR</name>
    <name type="ordered locus">A1I_01060</name>
</gene>
<comment type="function">
    <text evidence="1">May play a role in DNA repair. It seems to be involved in an RecBC-independent recombinational process of DNA repair. It may act with RecF and RecO.</text>
</comment>
<comment type="similarity">
    <text evidence="1">Belongs to the RecR family.</text>
</comment>
<evidence type="ECO:0000255" key="1">
    <source>
        <dbReference type="HAMAP-Rule" id="MF_00017"/>
    </source>
</evidence>
<reference key="1">
    <citation type="submission" date="2007-09" db="EMBL/GenBank/DDBJ databases">
        <title>Complete genome sequencing of Rickettsia bellii.</title>
        <authorList>
            <person name="Madan A."/>
            <person name="Lee H."/>
            <person name="Madan A."/>
            <person name="Yoon J.-G."/>
            <person name="Ryu G.-Y."/>
            <person name="Dasch G."/>
            <person name="Ereemeva M."/>
        </authorList>
    </citation>
    <scope>NUCLEOTIDE SEQUENCE [LARGE SCALE GENOMIC DNA]</scope>
    <source>
        <strain>OSU 85-389</strain>
    </source>
</reference>
<feature type="chain" id="PRO_0000322945" description="Recombination protein RecR">
    <location>
        <begin position="1"/>
        <end position="200"/>
    </location>
</feature>
<feature type="domain" description="Toprim" evidence="1">
    <location>
        <begin position="81"/>
        <end position="176"/>
    </location>
</feature>
<feature type="zinc finger region" description="C4-type" evidence="1">
    <location>
        <begin position="58"/>
        <end position="73"/>
    </location>
</feature>
<organism>
    <name type="scientific">Rickettsia bellii (strain OSU 85-389)</name>
    <dbReference type="NCBI Taxonomy" id="391896"/>
    <lineage>
        <taxon>Bacteria</taxon>
        <taxon>Pseudomonadati</taxon>
        <taxon>Pseudomonadota</taxon>
        <taxon>Alphaproteobacteria</taxon>
        <taxon>Rickettsiales</taxon>
        <taxon>Rickettsiaceae</taxon>
        <taxon>Rickettsieae</taxon>
        <taxon>Rickettsia</taxon>
        <taxon>belli group</taxon>
    </lineage>
</organism>